<sequence>MACNSTSLEAYTYLLLNTSNASDSGSTQLPAPLRISLAIVMLLMTVVGFLGNTVVCIIVYQRPAMRSAINLLLATLAFSDIMLSLCCMPFTAVTLITVRWHFGDHFCRLSATLYWFFVLEGVAILLIISVDRFLIIVQRQDKLNPRRAKVIIAVSWVLSFCIAGPSLTGWTLVEVPARAPQCVLGYTELPADRAYVVTLVVAVFFAPFGVMLCAYMCILNTVRKNAVRVHNQSDSLDLRQLTRAGLRRLQRQQQVSVDLSFKTKAFTTILILFVGFSLCWLPHSVYSLLSVFSQRFYCGSSFYATSTCVLWLSYLKSVFNPIVYCWRIKKFREACIELLPQTFQILPKVPERIRRRIQPSTVYVCNENQSAV</sequence>
<gene>
    <name type="primary">GPR45</name>
</gene>
<protein>
    <recommendedName>
        <fullName>Probable G-protein coupled receptor 45</fullName>
    </recommendedName>
    <alternativeName>
        <fullName>PSP24-1</fullName>
    </alternativeName>
    <alternativeName>
        <fullName>PSP24-alpha</fullName>
    </alternativeName>
</protein>
<dbReference type="EMBL" id="AF118266">
    <property type="protein sequence ID" value="AAD21056.1"/>
    <property type="molecule type" value="Genomic_DNA"/>
</dbReference>
<dbReference type="EMBL" id="AC012360">
    <property type="protein sequence ID" value="AAY15009.1"/>
    <property type="molecule type" value="Genomic_DNA"/>
</dbReference>
<dbReference type="EMBL" id="BC066879">
    <property type="protein sequence ID" value="AAH66879.1"/>
    <property type="molecule type" value="mRNA"/>
</dbReference>
<dbReference type="EMBL" id="BC066880">
    <property type="protein sequence ID" value="AAH66880.1"/>
    <property type="molecule type" value="mRNA"/>
</dbReference>
<dbReference type="EMBL" id="BC067455">
    <property type="protein sequence ID" value="AAH67455.1"/>
    <property type="molecule type" value="mRNA"/>
</dbReference>
<dbReference type="CCDS" id="CCDS2066.1"/>
<dbReference type="RefSeq" id="NP_009158.3">
    <property type="nucleotide sequence ID" value="NM_007227.3"/>
</dbReference>
<dbReference type="SMR" id="Q9Y5Y3"/>
<dbReference type="BioGRID" id="116411">
    <property type="interactions" value="358"/>
</dbReference>
<dbReference type="FunCoup" id="Q9Y5Y3">
    <property type="interactions" value="575"/>
</dbReference>
<dbReference type="IntAct" id="Q9Y5Y3">
    <property type="interactions" value="303"/>
</dbReference>
<dbReference type="STRING" id="9606.ENSP00000258456"/>
<dbReference type="ChEMBL" id="CHEMBL4523928"/>
<dbReference type="GlyCosmos" id="Q9Y5Y3">
    <property type="glycosylation" value="3 sites, No reported glycans"/>
</dbReference>
<dbReference type="GlyGen" id="Q9Y5Y3">
    <property type="glycosylation" value="3 sites"/>
</dbReference>
<dbReference type="iPTMnet" id="Q9Y5Y3"/>
<dbReference type="PhosphoSitePlus" id="Q9Y5Y3"/>
<dbReference type="BioMuta" id="GPR45"/>
<dbReference type="DMDM" id="82654940"/>
<dbReference type="PaxDb" id="9606-ENSP00000258456"/>
<dbReference type="Antibodypedia" id="17832">
    <property type="antibodies" value="173 antibodies from 28 providers"/>
</dbReference>
<dbReference type="DNASU" id="11250"/>
<dbReference type="Ensembl" id="ENST00000258456.3">
    <property type="protein sequence ID" value="ENSP00000258456.1"/>
    <property type="gene ID" value="ENSG00000135973.3"/>
</dbReference>
<dbReference type="GeneID" id="11250"/>
<dbReference type="KEGG" id="hsa:11250"/>
<dbReference type="MANE-Select" id="ENST00000258456.3">
    <property type="protein sequence ID" value="ENSP00000258456.1"/>
    <property type="RefSeq nucleotide sequence ID" value="NM_007227.3"/>
    <property type="RefSeq protein sequence ID" value="NP_009158.3"/>
</dbReference>
<dbReference type="UCSC" id="uc002tco.2">
    <property type="organism name" value="human"/>
</dbReference>
<dbReference type="AGR" id="HGNC:4503"/>
<dbReference type="CTD" id="11250"/>
<dbReference type="DisGeNET" id="11250"/>
<dbReference type="GeneCards" id="GPR45"/>
<dbReference type="HGNC" id="HGNC:4503">
    <property type="gene designation" value="GPR45"/>
</dbReference>
<dbReference type="HPA" id="ENSG00000135973">
    <property type="expression patterns" value="Tissue enhanced (brain)"/>
</dbReference>
<dbReference type="MalaCards" id="GPR45"/>
<dbReference type="MIM" id="604838">
    <property type="type" value="gene"/>
</dbReference>
<dbReference type="neXtProt" id="NX_Q9Y5Y3"/>
<dbReference type="OpenTargets" id="ENSG00000135973"/>
<dbReference type="PharmGKB" id="PA28892"/>
<dbReference type="VEuPathDB" id="HostDB:ENSG00000135973"/>
<dbReference type="eggNOG" id="KOG3656">
    <property type="taxonomic scope" value="Eukaryota"/>
</dbReference>
<dbReference type="GeneTree" id="ENSGT00950000183001"/>
<dbReference type="HOGENOM" id="CLU_009579_3_9_1"/>
<dbReference type="InParanoid" id="Q9Y5Y3"/>
<dbReference type="OMA" id="WHFGDYF"/>
<dbReference type="OrthoDB" id="10018052at2759"/>
<dbReference type="PAN-GO" id="Q9Y5Y3">
    <property type="GO annotations" value="2 GO annotations based on evolutionary models"/>
</dbReference>
<dbReference type="PhylomeDB" id="Q9Y5Y3"/>
<dbReference type="TreeFam" id="TF338633"/>
<dbReference type="PathwayCommons" id="Q9Y5Y3"/>
<dbReference type="Reactome" id="R-HSA-418555">
    <property type="pathway name" value="G alpha (s) signalling events"/>
</dbReference>
<dbReference type="SignaLink" id="Q9Y5Y3"/>
<dbReference type="BioGRID-ORCS" id="11250">
    <property type="hits" value="19 hits in 1141 CRISPR screens"/>
</dbReference>
<dbReference type="GeneWiki" id="GPR45"/>
<dbReference type="GenomeRNAi" id="11250"/>
<dbReference type="Pharos" id="Q9Y5Y3">
    <property type="development level" value="Tbio"/>
</dbReference>
<dbReference type="PRO" id="PR:Q9Y5Y3"/>
<dbReference type="Proteomes" id="UP000005640">
    <property type="component" value="Chromosome 2"/>
</dbReference>
<dbReference type="RNAct" id="Q9Y5Y3">
    <property type="molecule type" value="protein"/>
</dbReference>
<dbReference type="Bgee" id="ENSG00000135973">
    <property type="expression patterns" value="Expressed in cortical plate and 36 other cell types or tissues"/>
</dbReference>
<dbReference type="ExpressionAtlas" id="Q9Y5Y3">
    <property type="expression patterns" value="baseline and differential"/>
</dbReference>
<dbReference type="GO" id="GO:0005886">
    <property type="term" value="C:plasma membrane"/>
    <property type="evidence" value="ECO:0000304"/>
    <property type="project" value="Reactome"/>
</dbReference>
<dbReference type="GO" id="GO:0004930">
    <property type="term" value="F:G protein-coupled receptor activity"/>
    <property type="evidence" value="ECO:0000318"/>
    <property type="project" value="GO_Central"/>
</dbReference>
<dbReference type="GO" id="GO:0007186">
    <property type="term" value="P:G protein-coupled receptor signaling pathway"/>
    <property type="evidence" value="ECO:0000318"/>
    <property type="project" value="GO_Central"/>
</dbReference>
<dbReference type="CDD" id="cd15403">
    <property type="entry name" value="7tmA_GPR45"/>
    <property type="match status" value="1"/>
</dbReference>
<dbReference type="FunFam" id="1.20.1070.10:FF:000080">
    <property type="entry name" value="probable G-protein coupled receptor 63"/>
    <property type="match status" value="1"/>
</dbReference>
<dbReference type="Gene3D" id="1.20.1070.10">
    <property type="entry name" value="Rhodopsin 7-helix transmembrane proteins"/>
    <property type="match status" value="1"/>
</dbReference>
<dbReference type="InterPro" id="IPR051880">
    <property type="entry name" value="GPC_Orphan_Receptors"/>
</dbReference>
<dbReference type="InterPro" id="IPR000276">
    <property type="entry name" value="GPCR_Rhodpsn"/>
</dbReference>
<dbReference type="InterPro" id="IPR017452">
    <property type="entry name" value="GPCR_Rhodpsn_7TM"/>
</dbReference>
<dbReference type="PANTHER" id="PTHR24245">
    <property type="entry name" value="G-PROTEIN COUPLED RECEPTOR"/>
    <property type="match status" value="1"/>
</dbReference>
<dbReference type="PANTHER" id="PTHR24245:SF4">
    <property type="entry name" value="G-PROTEIN COUPLED RECEPTOR 45-RELATED"/>
    <property type="match status" value="1"/>
</dbReference>
<dbReference type="Pfam" id="PF00001">
    <property type="entry name" value="7tm_1"/>
    <property type="match status" value="1"/>
</dbReference>
<dbReference type="PRINTS" id="PR00237">
    <property type="entry name" value="GPCRRHODOPSN"/>
</dbReference>
<dbReference type="SUPFAM" id="SSF81321">
    <property type="entry name" value="Family A G protein-coupled receptor-like"/>
    <property type="match status" value="1"/>
</dbReference>
<dbReference type="PROSITE" id="PS50262">
    <property type="entry name" value="G_PROTEIN_RECEP_F1_2"/>
    <property type="match status" value="1"/>
</dbReference>
<comment type="function">
    <text>Orphan receptor. May play a role in brain function.</text>
</comment>
<comment type="interaction">
    <interactant intactId="EBI-1751869">
        <id>Q9Y5Y3</id>
    </interactant>
    <interactant intactId="EBI-9087860">
        <id>P32243-2</id>
        <label>OTX2</label>
    </interactant>
    <organismsDiffer>false</organismsDiffer>
    <experiments>3</experiments>
</comment>
<comment type="subcellular location">
    <subcellularLocation>
        <location>Cell membrane</location>
        <topology>Multi-pass membrane protein</topology>
    </subcellularLocation>
</comment>
<comment type="tissue specificity">
    <text>Expressed in brain; detected in the basal forebrain, frontal cortex, and caudate, but not in thalamus, hippocampus, or putamen.</text>
</comment>
<comment type="similarity">
    <text evidence="2">Belongs to the G-protein coupled receptor 1 family.</text>
</comment>
<accession>Q9Y5Y3</accession>
<accession>Q6NWS4</accession>
<accession>Q6NXU6</accession>
<organism>
    <name type="scientific">Homo sapiens</name>
    <name type="common">Human</name>
    <dbReference type="NCBI Taxonomy" id="9606"/>
    <lineage>
        <taxon>Eukaryota</taxon>
        <taxon>Metazoa</taxon>
        <taxon>Chordata</taxon>
        <taxon>Craniata</taxon>
        <taxon>Vertebrata</taxon>
        <taxon>Euteleostomi</taxon>
        <taxon>Mammalia</taxon>
        <taxon>Eutheria</taxon>
        <taxon>Euarchontoglires</taxon>
        <taxon>Primates</taxon>
        <taxon>Haplorrhini</taxon>
        <taxon>Catarrhini</taxon>
        <taxon>Hominidae</taxon>
        <taxon>Homo</taxon>
    </lineage>
</organism>
<reference key="1">
    <citation type="journal article" date="1999" name="Genomics">
        <title>Discovery of three novel orphan G-protein-coupled receptors.</title>
        <authorList>
            <person name="Marchese A."/>
            <person name="Sawzdargo M."/>
            <person name="Nguyen T."/>
            <person name="Cheng R."/>
            <person name="Heng H.H.Q."/>
            <person name="Nowak T."/>
            <person name="Im D.-S."/>
            <person name="Lynch K.R."/>
            <person name="George S.R."/>
            <person name="O'Dowd B.F."/>
        </authorList>
    </citation>
    <scope>NUCLEOTIDE SEQUENCE [GENOMIC DNA]</scope>
    <scope>VARIANT PHE-312</scope>
</reference>
<reference key="2">
    <citation type="journal article" date="2005" name="Nature">
        <title>Generation and annotation of the DNA sequences of human chromosomes 2 and 4.</title>
        <authorList>
            <person name="Hillier L.W."/>
            <person name="Graves T.A."/>
            <person name="Fulton R.S."/>
            <person name="Fulton L.A."/>
            <person name="Pepin K.H."/>
            <person name="Minx P."/>
            <person name="Wagner-McPherson C."/>
            <person name="Layman D."/>
            <person name="Wylie K."/>
            <person name="Sekhon M."/>
            <person name="Becker M.C."/>
            <person name="Fewell G.A."/>
            <person name="Delehaunty K.D."/>
            <person name="Miner T.L."/>
            <person name="Nash W.E."/>
            <person name="Kremitzki C."/>
            <person name="Oddy L."/>
            <person name="Du H."/>
            <person name="Sun H."/>
            <person name="Bradshaw-Cordum H."/>
            <person name="Ali J."/>
            <person name="Carter J."/>
            <person name="Cordes M."/>
            <person name="Harris A."/>
            <person name="Isak A."/>
            <person name="van Brunt A."/>
            <person name="Nguyen C."/>
            <person name="Du F."/>
            <person name="Courtney L."/>
            <person name="Kalicki J."/>
            <person name="Ozersky P."/>
            <person name="Abbott S."/>
            <person name="Armstrong J."/>
            <person name="Belter E.A."/>
            <person name="Caruso L."/>
            <person name="Cedroni M."/>
            <person name="Cotton M."/>
            <person name="Davidson T."/>
            <person name="Desai A."/>
            <person name="Elliott G."/>
            <person name="Erb T."/>
            <person name="Fronick C."/>
            <person name="Gaige T."/>
            <person name="Haakenson W."/>
            <person name="Haglund K."/>
            <person name="Holmes A."/>
            <person name="Harkins R."/>
            <person name="Kim K."/>
            <person name="Kruchowski S.S."/>
            <person name="Strong C.M."/>
            <person name="Grewal N."/>
            <person name="Goyea E."/>
            <person name="Hou S."/>
            <person name="Levy A."/>
            <person name="Martinka S."/>
            <person name="Mead K."/>
            <person name="McLellan M.D."/>
            <person name="Meyer R."/>
            <person name="Randall-Maher J."/>
            <person name="Tomlinson C."/>
            <person name="Dauphin-Kohlberg S."/>
            <person name="Kozlowicz-Reilly A."/>
            <person name="Shah N."/>
            <person name="Swearengen-Shahid S."/>
            <person name="Snider J."/>
            <person name="Strong J.T."/>
            <person name="Thompson J."/>
            <person name="Yoakum M."/>
            <person name="Leonard S."/>
            <person name="Pearman C."/>
            <person name="Trani L."/>
            <person name="Radionenko M."/>
            <person name="Waligorski J.E."/>
            <person name="Wang C."/>
            <person name="Rock S.M."/>
            <person name="Tin-Wollam A.-M."/>
            <person name="Maupin R."/>
            <person name="Latreille P."/>
            <person name="Wendl M.C."/>
            <person name="Yang S.-P."/>
            <person name="Pohl C."/>
            <person name="Wallis J.W."/>
            <person name="Spieth J."/>
            <person name="Bieri T.A."/>
            <person name="Berkowicz N."/>
            <person name="Nelson J.O."/>
            <person name="Osborne J."/>
            <person name="Ding L."/>
            <person name="Meyer R."/>
            <person name="Sabo A."/>
            <person name="Shotland Y."/>
            <person name="Sinha P."/>
            <person name="Wohldmann P.E."/>
            <person name="Cook L.L."/>
            <person name="Hickenbotham M.T."/>
            <person name="Eldred J."/>
            <person name="Williams D."/>
            <person name="Jones T.A."/>
            <person name="She X."/>
            <person name="Ciccarelli F.D."/>
            <person name="Izaurralde E."/>
            <person name="Taylor J."/>
            <person name="Schmutz J."/>
            <person name="Myers R.M."/>
            <person name="Cox D.R."/>
            <person name="Huang X."/>
            <person name="McPherson J.D."/>
            <person name="Mardis E.R."/>
            <person name="Clifton S.W."/>
            <person name="Warren W.C."/>
            <person name="Chinwalla A.T."/>
            <person name="Eddy S.R."/>
            <person name="Marra M.A."/>
            <person name="Ovcharenko I."/>
            <person name="Furey T.S."/>
            <person name="Miller W."/>
            <person name="Eichler E.E."/>
            <person name="Bork P."/>
            <person name="Suyama M."/>
            <person name="Torrents D."/>
            <person name="Waterston R.H."/>
            <person name="Wilson R.K."/>
        </authorList>
    </citation>
    <scope>NUCLEOTIDE SEQUENCE [LARGE SCALE GENOMIC DNA]</scope>
</reference>
<reference key="3">
    <citation type="journal article" date="2004" name="Genome Res.">
        <title>The status, quality, and expansion of the NIH full-length cDNA project: the Mammalian Gene Collection (MGC).</title>
        <authorList>
            <consortium name="The MGC Project Team"/>
        </authorList>
    </citation>
    <scope>NUCLEOTIDE SEQUENCE [LARGE SCALE MRNA]</scope>
</reference>
<reference key="4">
    <citation type="journal article" date="2006" name="Science">
        <title>The consensus coding sequences of human breast and colorectal cancers.</title>
        <authorList>
            <person name="Sjoeblom T."/>
            <person name="Jones S."/>
            <person name="Wood L.D."/>
            <person name="Parsons D.W."/>
            <person name="Lin J."/>
            <person name="Barber T.D."/>
            <person name="Mandelker D."/>
            <person name="Leary R.J."/>
            <person name="Ptak J."/>
            <person name="Silliman N."/>
            <person name="Szabo S."/>
            <person name="Buckhaults P."/>
            <person name="Farrell C."/>
            <person name="Meeh P."/>
            <person name="Markowitz S.D."/>
            <person name="Willis J."/>
            <person name="Dawson D."/>
            <person name="Willson J.K.V."/>
            <person name="Gazdar A.F."/>
            <person name="Hartigan J."/>
            <person name="Wu L."/>
            <person name="Liu C."/>
            <person name="Parmigiani G."/>
            <person name="Park B.H."/>
            <person name="Bachman K.E."/>
            <person name="Papadopoulos N."/>
            <person name="Vogelstein B."/>
            <person name="Kinzler K.W."/>
            <person name="Velculescu V.E."/>
        </authorList>
    </citation>
    <scope>VARIANT [LARGE SCALE ANALYSIS] CYS-7</scope>
</reference>
<feature type="chain" id="PRO_0000069574" description="Probable G-protein coupled receptor 45">
    <location>
        <begin position="1"/>
        <end position="372"/>
    </location>
</feature>
<feature type="topological domain" description="Extracellular" evidence="1">
    <location>
        <begin position="1"/>
        <end position="38"/>
    </location>
</feature>
<feature type="transmembrane region" description="Helical; Name=1" evidence="1">
    <location>
        <begin position="39"/>
        <end position="59"/>
    </location>
</feature>
<feature type="topological domain" description="Cytoplasmic" evidence="1">
    <location>
        <begin position="60"/>
        <end position="75"/>
    </location>
</feature>
<feature type="transmembrane region" description="Helical; Name=2" evidence="1">
    <location>
        <begin position="76"/>
        <end position="96"/>
    </location>
</feature>
<feature type="topological domain" description="Extracellular" evidence="1">
    <location>
        <begin position="97"/>
        <end position="109"/>
    </location>
</feature>
<feature type="transmembrane region" description="Helical; Name=3" evidence="1">
    <location>
        <begin position="110"/>
        <end position="130"/>
    </location>
</feature>
<feature type="topological domain" description="Cytoplasmic" evidence="1">
    <location>
        <begin position="131"/>
        <end position="149"/>
    </location>
</feature>
<feature type="transmembrane region" description="Helical; Name=4" evidence="1">
    <location>
        <begin position="150"/>
        <end position="170"/>
    </location>
</feature>
<feature type="topological domain" description="Extracellular" evidence="1">
    <location>
        <begin position="171"/>
        <end position="198"/>
    </location>
</feature>
<feature type="transmembrane region" description="Helical; Name=5" evidence="1">
    <location>
        <begin position="199"/>
        <end position="219"/>
    </location>
</feature>
<feature type="topological domain" description="Cytoplasmic" evidence="1">
    <location>
        <begin position="220"/>
        <end position="268"/>
    </location>
</feature>
<feature type="transmembrane region" description="Helical; Name=6" evidence="1">
    <location>
        <begin position="269"/>
        <end position="289"/>
    </location>
</feature>
<feature type="topological domain" description="Extracellular" evidence="1">
    <location>
        <begin position="290"/>
        <end position="305"/>
    </location>
</feature>
<feature type="transmembrane region" description="Helical; Name=7" evidence="1">
    <location>
        <begin position="306"/>
        <end position="326"/>
    </location>
</feature>
<feature type="topological domain" description="Cytoplasmic" evidence="1">
    <location>
        <begin position="327"/>
        <end position="372"/>
    </location>
</feature>
<feature type="glycosylation site" description="N-linked (GlcNAc...) asparagine" evidence="1">
    <location>
        <position position="4"/>
    </location>
</feature>
<feature type="glycosylation site" description="N-linked (GlcNAc...) asparagine" evidence="1">
    <location>
        <position position="17"/>
    </location>
</feature>
<feature type="glycosylation site" description="N-linked (GlcNAc...) asparagine" evidence="1">
    <location>
        <position position="20"/>
    </location>
</feature>
<feature type="sequence variant" id="VAR_035759" description="In a breast cancer sample; somatic mutation." evidence="4">
    <original>S</original>
    <variation>C</variation>
    <location>
        <position position="7"/>
    </location>
</feature>
<feature type="sequence variant" id="VAR_049394" description="In dbSNP:rs35946826." evidence="3">
    <original>L</original>
    <variation>F</variation>
    <location>
        <position position="312"/>
    </location>
</feature>
<feature type="sequence conflict" description="In Ref. 3; AAH67455." evidence="5" ref="3">
    <original>L</original>
    <variation>P</variation>
    <location>
        <position position="270"/>
    </location>
</feature>
<evidence type="ECO:0000255" key="1"/>
<evidence type="ECO:0000255" key="2">
    <source>
        <dbReference type="PROSITE-ProRule" id="PRU00521"/>
    </source>
</evidence>
<evidence type="ECO:0000269" key="3">
    <source>
    </source>
</evidence>
<evidence type="ECO:0000269" key="4">
    <source>
    </source>
</evidence>
<evidence type="ECO:0000305" key="5"/>
<keyword id="KW-1003">Cell membrane</keyword>
<keyword id="KW-0297">G-protein coupled receptor</keyword>
<keyword id="KW-0325">Glycoprotein</keyword>
<keyword id="KW-0472">Membrane</keyword>
<keyword id="KW-0675">Receptor</keyword>
<keyword id="KW-1185">Reference proteome</keyword>
<keyword id="KW-0807">Transducer</keyword>
<keyword id="KW-0812">Transmembrane</keyword>
<keyword id="KW-1133">Transmembrane helix</keyword>
<proteinExistence type="evidence at protein level"/>
<name>GPR45_HUMAN</name>